<feature type="chain" id="PRO_0000110174" description="Fluoride-specific ion channel FluC 2">
    <location>
        <begin position="1"/>
        <end position="117"/>
    </location>
</feature>
<feature type="transmembrane region" description="Helical" evidence="1">
    <location>
        <begin position="1"/>
        <end position="21"/>
    </location>
</feature>
<feature type="transmembrane region" description="Helical" evidence="1">
    <location>
        <begin position="33"/>
        <end position="53"/>
    </location>
</feature>
<feature type="transmembrane region" description="Helical" evidence="1">
    <location>
        <begin position="60"/>
        <end position="80"/>
    </location>
</feature>
<feature type="transmembrane region" description="Helical" evidence="1">
    <location>
        <begin position="95"/>
        <end position="115"/>
    </location>
</feature>
<feature type="binding site" evidence="1">
    <location>
        <position position="71"/>
    </location>
    <ligand>
        <name>Na(+)</name>
        <dbReference type="ChEBI" id="CHEBI:29101"/>
        <note>structural</note>
    </ligand>
</feature>
<feature type="binding site" evidence="1">
    <location>
        <position position="74"/>
    </location>
    <ligand>
        <name>Na(+)</name>
        <dbReference type="ChEBI" id="CHEBI:29101"/>
        <note>structural</note>
    </ligand>
</feature>
<sequence>MISIILVMIGGGFGAIARSAITDYFNHKFTSKLPIATLIVNLVGSFLIGLTIGLSISTSWFPAFFVTGFLGGLTTFSTLAKELTLMMTPKFNINLFLNYSLLQFIIGFIACYIGYHI</sequence>
<evidence type="ECO:0000255" key="1">
    <source>
        <dbReference type="HAMAP-Rule" id="MF_00454"/>
    </source>
</evidence>
<accession>Q5HEZ2</accession>
<gene>
    <name evidence="1" type="primary">fluC2</name>
    <name evidence="1" type="synonym">crcB2</name>
    <name type="ordered locus">SACOL1833</name>
</gene>
<dbReference type="EMBL" id="CP000046">
    <property type="protein sequence ID" value="AAW38360.1"/>
    <property type="molecule type" value="Genomic_DNA"/>
</dbReference>
<dbReference type="RefSeq" id="WP_000623474.1">
    <property type="nucleotide sequence ID" value="NC_002951.2"/>
</dbReference>
<dbReference type="SMR" id="Q5HEZ2"/>
<dbReference type="KEGG" id="sac:SACOL1833"/>
<dbReference type="HOGENOM" id="CLU_114342_2_3_9"/>
<dbReference type="Proteomes" id="UP000000530">
    <property type="component" value="Chromosome"/>
</dbReference>
<dbReference type="GO" id="GO:0005886">
    <property type="term" value="C:plasma membrane"/>
    <property type="evidence" value="ECO:0007669"/>
    <property type="project" value="UniProtKB-SubCell"/>
</dbReference>
<dbReference type="GO" id="GO:0062054">
    <property type="term" value="F:fluoride channel activity"/>
    <property type="evidence" value="ECO:0007669"/>
    <property type="project" value="UniProtKB-UniRule"/>
</dbReference>
<dbReference type="GO" id="GO:0046872">
    <property type="term" value="F:metal ion binding"/>
    <property type="evidence" value="ECO:0007669"/>
    <property type="project" value="UniProtKB-KW"/>
</dbReference>
<dbReference type="GO" id="GO:0140114">
    <property type="term" value="P:cellular detoxification of fluoride"/>
    <property type="evidence" value="ECO:0007669"/>
    <property type="project" value="UniProtKB-UniRule"/>
</dbReference>
<dbReference type="HAMAP" id="MF_00454">
    <property type="entry name" value="FluC"/>
    <property type="match status" value="1"/>
</dbReference>
<dbReference type="InterPro" id="IPR003691">
    <property type="entry name" value="FluC"/>
</dbReference>
<dbReference type="PANTHER" id="PTHR28259">
    <property type="entry name" value="FLUORIDE EXPORT PROTEIN 1-RELATED"/>
    <property type="match status" value="1"/>
</dbReference>
<dbReference type="PANTHER" id="PTHR28259:SF16">
    <property type="entry name" value="FLUORIDE-SPECIFIC ION CHANNEL FLUC 2"/>
    <property type="match status" value="1"/>
</dbReference>
<dbReference type="Pfam" id="PF02537">
    <property type="entry name" value="CRCB"/>
    <property type="match status" value="1"/>
</dbReference>
<protein>
    <recommendedName>
        <fullName evidence="1">Fluoride-specific ion channel FluC 2</fullName>
    </recommendedName>
</protein>
<comment type="function">
    <text evidence="1">Fluoride-specific ion channel. Important for reducing fluoride concentration in the cell, thus reducing its toxicity.</text>
</comment>
<comment type="catalytic activity">
    <reaction evidence="1">
        <text>fluoride(in) = fluoride(out)</text>
        <dbReference type="Rhea" id="RHEA:76159"/>
        <dbReference type="ChEBI" id="CHEBI:17051"/>
    </reaction>
    <physiologicalReaction direction="left-to-right" evidence="1">
        <dbReference type="Rhea" id="RHEA:76160"/>
    </physiologicalReaction>
</comment>
<comment type="activity regulation">
    <text evidence="1">Na(+) is not transported, but it plays an essential structural role and its presence is essential for fluoride channel function.</text>
</comment>
<comment type="subcellular location">
    <subcellularLocation>
        <location evidence="1">Cell membrane</location>
        <topology evidence="1">Multi-pass membrane protein</topology>
    </subcellularLocation>
</comment>
<comment type="similarity">
    <text evidence="1">Belongs to the fluoride channel Fluc/FEX (TC 1.A.43) family.</text>
</comment>
<name>FLUC2_STAAC</name>
<keyword id="KW-1003">Cell membrane</keyword>
<keyword id="KW-0407">Ion channel</keyword>
<keyword id="KW-0406">Ion transport</keyword>
<keyword id="KW-0472">Membrane</keyword>
<keyword id="KW-0479">Metal-binding</keyword>
<keyword id="KW-0915">Sodium</keyword>
<keyword id="KW-0812">Transmembrane</keyword>
<keyword id="KW-1133">Transmembrane helix</keyword>
<keyword id="KW-0813">Transport</keyword>
<reference key="1">
    <citation type="journal article" date="2005" name="J. Bacteriol.">
        <title>Insights on evolution of virulence and resistance from the complete genome analysis of an early methicillin-resistant Staphylococcus aureus strain and a biofilm-producing methicillin-resistant Staphylococcus epidermidis strain.</title>
        <authorList>
            <person name="Gill S.R."/>
            <person name="Fouts D.E."/>
            <person name="Archer G.L."/>
            <person name="Mongodin E.F."/>
            <person name="DeBoy R.T."/>
            <person name="Ravel J."/>
            <person name="Paulsen I.T."/>
            <person name="Kolonay J.F."/>
            <person name="Brinkac L.M."/>
            <person name="Beanan M.J."/>
            <person name="Dodson R.J."/>
            <person name="Daugherty S.C."/>
            <person name="Madupu R."/>
            <person name="Angiuoli S.V."/>
            <person name="Durkin A.S."/>
            <person name="Haft D.H."/>
            <person name="Vamathevan J.J."/>
            <person name="Khouri H."/>
            <person name="Utterback T.R."/>
            <person name="Lee C."/>
            <person name="Dimitrov G."/>
            <person name="Jiang L."/>
            <person name="Qin H."/>
            <person name="Weidman J."/>
            <person name="Tran K."/>
            <person name="Kang K.H."/>
            <person name="Hance I.R."/>
            <person name="Nelson K.E."/>
            <person name="Fraser C.M."/>
        </authorList>
    </citation>
    <scope>NUCLEOTIDE SEQUENCE [LARGE SCALE GENOMIC DNA]</scope>
    <source>
        <strain>COL</strain>
    </source>
</reference>
<proteinExistence type="inferred from homology"/>
<organism>
    <name type="scientific">Staphylococcus aureus (strain COL)</name>
    <dbReference type="NCBI Taxonomy" id="93062"/>
    <lineage>
        <taxon>Bacteria</taxon>
        <taxon>Bacillati</taxon>
        <taxon>Bacillota</taxon>
        <taxon>Bacilli</taxon>
        <taxon>Bacillales</taxon>
        <taxon>Staphylococcaceae</taxon>
        <taxon>Staphylococcus</taxon>
    </lineage>
</organism>